<organism>
    <name type="scientific">Rippkaea orientalis (strain PCC 8801 / RF-1)</name>
    <name type="common">Cyanothece sp. (strain PCC 8801)</name>
    <dbReference type="NCBI Taxonomy" id="41431"/>
    <lineage>
        <taxon>Bacteria</taxon>
        <taxon>Bacillati</taxon>
        <taxon>Cyanobacteriota</taxon>
        <taxon>Cyanophyceae</taxon>
        <taxon>Oscillatoriophycideae</taxon>
        <taxon>Chroococcales</taxon>
        <taxon>Aphanothecaceae</taxon>
        <taxon>Rippkaea</taxon>
        <taxon>Rippkaea orientalis</taxon>
    </lineage>
</organism>
<accession>B7JWU1</accession>
<sequence length="120" mass="13629">MKAQEIIKSIEAEYLKSDLPTIHVGDTVRVGVRISEGGKERIQPYEGTVIAMRNGGISETITVRKIFQGVGVERVFLLHSPIIAAITVIRRGKVRRAKLYYLRDRVGKATRIRQRFDRPL</sequence>
<comment type="function">
    <text evidence="1">This protein is located at the 30S-50S ribosomal subunit interface and may play a role in the structure and function of the aminoacyl-tRNA binding site.</text>
</comment>
<comment type="similarity">
    <text evidence="1">Belongs to the bacterial ribosomal protein bL19 family.</text>
</comment>
<keyword id="KW-1185">Reference proteome</keyword>
<keyword id="KW-0687">Ribonucleoprotein</keyword>
<keyword id="KW-0689">Ribosomal protein</keyword>
<feature type="chain" id="PRO_1000193820" description="Large ribosomal subunit protein bL19">
    <location>
        <begin position="1"/>
        <end position="120"/>
    </location>
</feature>
<reference key="1">
    <citation type="journal article" date="2011" name="MBio">
        <title>Novel metabolic attributes of the genus Cyanothece, comprising a group of unicellular nitrogen-fixing Cyanobacteria.</title>
        <authorList>
            <person name="Bandyopadhyay A."/>
            <person name="Elvitigala T."/>
            <person name="Welsh E."/>
            <person name="Stockel J."/>
            <person name="Liberton M."/>
            <person name="Min H."/>
            <person name="Sherman L.A."/>
            <person name="Pakrasi H.B."/>
        </authorList>
    </citation>
    <scope>NUCLEOTIDE SEQUENCE [LARGE SCALE GENOMIC DNA]</scope>
    <source>
        <strain>PCC 8801 / RF-1</strain>
    </source>
</reference>
<proteinExistence type="inferred from homology"/>
<gene>
    <name evidence="1" type="primary">rplS</name>
    <name evidence="1" type="synonym">rpl19</name>
    <name type="ordered locus">PCC8801_1743</name>
</gene>
<name>RL19_RIPO1</name>
<protein>
    <recommendedName>
        <fullName evidence="1">Large ribosomal subunit protein bL19</fullName>
    </recommendedName>
    <alternativeName>
        <fullName evidence="2">50S ribosomal protein L19</fullName>
    </alternativeName>
</protein>
<evidence type="ECO:0000255" key="1">
    <source>
        <dbReference type="HAMAP-Rule" id="MF_00402"/>
    </source>
</evidence>
<evidence type="ECO:0000305" key="2"/>
<dbReference type="EMBL" id="CP001287">
    <property type="protein sequence ID" value="ACK65790.1"/>
    <property type="molecule type" value="Genomic_DNA"/>
</dbReference>
<dbReference type="RefSeq" id="WP_012595063.1">
    <property type="nucleotide sequence ID" value="NC_011726.1"/>
</dbReference>
<dbReference type="SMR" id="B7JWU1"/>
<dbReference type="STRING" id="41431.PCC8801_1743"/>
<dbReference type="KEGG" id="cyp:PCC8801_1743"/>
<dbReference type="eggNOG" id="COG0335">
    <property type="taxonomic scope" value="Bacteria"/>
</dbReference>
<dbReference type="HOGENOM" id="CLU_103507_2_0_3"/>
<dbReference type="OrthoDB" id="9803541at2"/>
<dbReference type="Proteomes" id="UP000008204">
    <property type="component" value="Chromosome"/>
</dbReference>
<dbReference type="GO" id="GO:0022625">
    <property type="term" value="C:cytosolic large ribosomal subunit"/>
    <property type="evidence" value="ECO:0007669"/>
    <property type="project" value="TreeGrafter"/>
</dbReference>
<dbReference type="GO" id="GO:0003735">
    <property type="term" value="F:structural constituent of ribosome"/>
    <property type="evidence" value="ECO:0007669"/>
    <property type="project" value="InterPro"/>
</dbReference>
<dbReference type="GO" id="GO:0006412">
    <property type="term" value="P:translation"/>
    <property type="evidence" value="ECO:0007669"/>
    <property type="project" value="UniProtKB-UniRule"/>
</dbReference>
<dbReference type="FunFam" id="2.30.30.790:FF:000001">
    <property type="entry name" value="50S ribosomal protein L19"/>
    <property type="match status" value="1"/>
</dbReference>
<dbReference type="Gene3D" id="2.30.30.790">
    <property type="match status" value="1"/>
</dbReference>
<dbReference type="HAMAP" id="MF_00402">
    <property type="entry name" value="Ribosomal_bL19"/>
    <property type="match status" value="1"/>
</dbReference>
<dbReference type="InterPro" id="IPR001857">
    <property type="entry name" value="Ribosomal_bL19"/>
</dbReference>
<dbReference type="InterPro" id="IPR018257">
    <property type="entry name" value="Ribosomal_bL19_CS"/>
</dbReference>
<dbReference type="InterPro" id="IPR038657">
    <property type="entry name" value="Ribosomal_bL19_sf"/>
</dbReference>
<dbReference type="InterPro" id="IPR008991">
    <property type="entry name" value="Translation_prot_SH3-like_sf"/>
</dbReference>
<dbReference type="NCBIfam" id="TIGR01024">
    <property type="entry name" value="rplS_bact"/>
    <property type="match status" value="1"/>
</dbReference>
<dbReference type="PANTHER" id="PTHR15680:SF9">
    <property type="entry name" value="LARGE RIBOSOMAL SUBUNIT PROTEIN BL19M"/>
    <property type="match status" value="1"/>
</dbReference>
<dbReference type="PANTHER" id="PTHR15680">
    <property type="entry name" value="RIBOSOMAL PROTEIN L19"/>
    <property type="match status" value="1"/>
</dbReference>
<dbReference type="Pfam" id="PF01245">
    <property type="entry name" value="Ribosomal_L19"/>
    <property type="match status" value="1"/>
</dbReference>
<dbReference type="PIRSF" id="PIRSF002191">
    <property type="entry name" value="Ribosomal_L19"/>
    <property type="match status" value="1"/>
</dbReference>
<dbReference type="PRINTS" id="PR00061">
    <property type="entry name" value="RIBOSOMALL19"/>
</dbReference>
<dbReference type="SUPFAM" id="SSF50104">
    <property type="entry name" value="Translation proteins SH3-like domain"/>
    <property type="match status" value="1"/>
</dbReference>
<dbReference type="PROSITE" id="PS01015">
    <property type="entry name" value="RIBOSOMAL_L19"/>
    <property type="match status" value="1"/>
</dbReference>